<evidence type="ECO:0000255" key="1">
    <source>
        <dbReference type="HAMAP-Rule" id="MF_00315"/>
    </source>
</evidence>
<proteinExistence type="inferred from homology"/>
<organism>
    <name type="scientific">Crocosphaera subtropica (strain ATCC 51142 / BH68)</name>
    <name type="common">Cyanothece sp. (strain ATCC 51142)</name>
    <dbReference type="NCBI Taxonomy" id="43989"/>
    <lineage>
        <taxon>Bacteria</taxon>
        <taxon>Bacillati</taxon>
        <taxon>Cyanobacteriota</taxon>
        <taxon>Cyanophyceae</taxon>
        <taxon>Oscillatoriophycideae</taxon>
        <taxon>Chroococcales</taxon>
        <taxon>Aphanothecaceae</taxon>
        <taxon>Crocosphaera</taxon>
        <taxon>Crocosphaera subtropica</taxon>
    </lineage>
</organism>
<comment type="function">
    <text evidence="1">Catalyzes the acyloin condensation reaction between C atoms 2 and 3 of pyruvate and glyceraldehyde 3-phosphate to yield 1-deoxy-D-xylulose-5-phosphate (DXP).</text>
</comment>
<comment type="catalytic activity">
    <reaction evidence="1">
        <text>D-glyceraldehyde 3-phosphate + pyruvate + H(+) = 1-deoxy-D-xylulose 5-phosphate + CO2</text>
        <dbReference type="Rhea" id="RHEA:12605"/>
        <dbReference type="ChEBI" id="CHEBI:15361"/>
        <dbReference type="ChEBI" id="CHEBI:15378"/>
        <dbReference type="ChEBI" id="CHEBI:16526"/>
        <dbReference type="ChEBI" id="CHEBI:57792"/>
        <dbReference type="ChEBI" id="CHEBI:59776"/>
        <dbReference type="EC" id="2.2.1.7"/>
    </reaction>
</comment>
<comment type="cofactor">
    <cofactor evidence="1">
        <name>Mg(2+)</name>
        <dbReference type="ChEBI" id="CHEBI:18420"/>
    </cofactor>
    <text evidence="1">Binds 1 Mg(2+) ion per subunit.</text>
</comment>
<comment type="cofactor">
    <cofactor evidence="1">
        <name>thiamine diphosphate</name>
        <dbReference type="ChEBI" id="CHEBI:58937"/>
    </cofactor>
    <text evidence="1">Binds 1 thiamine pyrophosphate per subunit.</text>
</comment>
<comment type="pathway">
    <text evidence="1">Metabolic intermediate biosynthesis; 1-deoxy-D-xylulose 5-phosphate biosynthesis; 1-deoxy-D-xylulose 5-phosphate from D-glyceraldehyde 3-phosphate and pyruvate: step 1/1.</text>
</comment>
<comment type="subunit">
    <text evidence="1">Homodimer.</text>
</comment>
<comment type="similarity">
    <text evidence="1">Belongs to the transketolase family. DXPS subfamily.</text>
</comment>
<keyword id="KW-0414">Isoprene biosynthesis</keyword>
<keyword id="KW-0460">Magnesium</keyword>
<keyword id="KW-0479">Metal-binding</keyword>
<keyword id="KW-1185">Reference proteome</keyword>
<keyword id="KW-0784">Thiamine biosynthesis</keyword>
<keyword id="KW-0786">Thiamine pyrophosphate</keyword>
<keyword id="KW-0808">Transferase</keyword>
<accession>B1WWM7</accession>
<dbReference type="EC" id="2.2.1.7" evidence="1"/>
<dbReference type="EMBL" id="CP000806">
    <property type="protein sequence ID" value="ACB50751.1"/>
    <property type="molecule type" value="Genomic_DNA"/>
</dbReference>
<dbReference type="RefSeq" id="WP_009544214.1">
    <property type="nucleotide sequence ID" value="NC_010546.1"/>
</dbReference>
<dbReference type="SMR" id="B1WWM7"/>
<dbReference type="STRING" id="43989.cce_1401"/>
<dbReference type="KEGG" id="cyt:cce_1401"/>
<dbReference type="eggNOG" id="COG1154">
    <property type="taxonomic scope" value="Bacteria"/>
</dbReference>
<dbReference type="HOGENOM" id="CLU_009227_1_4_3"/>
<dbReference type="OrthoDB" id="9803371at2"/>
<dbReference type="UniPathway" id="UPA00064">
    <property type="reaction ID" value="UER00091"/>
</dbReference>
<dbReference type="Proteomes" id="UP000001203">
    <property type="component" value="Chromosome circular"/>
</dbReference>
<dbReference type="GO" id="GO:0005829">
    <property type="term" value="C:cytosol"/>
    <property type="evidence" value="ECO:0007669"/>
    <property type="project" value="TreeGrafter"/>
</dbReference>
<dbReference type="GO" id="GO:0008661">
    <property type="term" value="F:1-deoxy-D-xylulose-5-phosphate synthase activity"/>
    <property type="evidence" value="ECO:0007669"/>
    <property type="project" value="UniProtKB-UniRule"/>
</dbReference>
<dbReference type="GO" id="GO:0000287">
    <property type="term" value="F:magnesium ion binding"/>
    <property type="evidence" value="ECO:0007669"/>
    <property type="project" value="UniProtKB-UniRule"/>
</dbReference>
<dbReference type="GO" id="GO:0030976">
    <property type="term" value="F:thiamine pyrophosphate binding"/>
    <property type="evidence" value="ECO:0007669"/>
    <property type="project" value="UniProtKB-UniRule"/>
</dbReference>
<dbReference type="GO" id="GO:0052865">
    <property type="term" value="P:1-deoxy-D-xylulose 5-phosphate biosynthetic process"/>
    <property type="evidence" value="ECO:0007669"/>
    <property type="project" value="UniProtKB-UniPathway"/>
</dbReference>
<dbReference type="GO" id="GO:0019288">
    <property type="term" value="P:isopentenyl diphosphate biosynthetic process, methylerythritol 4-phosphate pathway"/>
    <property type="evidence" value="ECO:0007669"/>
    <property type="project" value="TreeGrafter"/>
</dbReference>
<dbReference type="GO" id="GO:0016114">
    <property type="term" value="P:terpenoid biosynthetic process"/>
    <property type="evidence" value="ECO:0007669"/>
    <property type="project" value="UniProtKB-UniRule"/>
</dbReference>
<dbReference type="GO" id="GO:0009228">
    <property type="term" value="P:thiamine biosynthetic process"/>
    <property type="evidence" value="ECO:0007669"/>
    <property type="project" value="UniProtKB-UniRule"/>
</dbReference>
<dbReference type="CDD" id="cd02007">
    <property type="entry name" value="TPP_DXS"/>
    <property type="match status" value="1"/>
</dbReference>
<dbReference type="CDD" id="cd07033">
    <property type="entry name" value="TPP_PYR_DXS_TK_like"/>
    <property type="match status" value="1"/>
</dbReference>
<dbReference type="FunFam" id="3.40.50.920:FF:000002">
    <property type="entry name" value="1-deoxy-D-xylulose-5-phosphate synthase"/>
    <property type="match status" value="1"/>
</dbReference>
<dbReference type="FunFam" id="3.40.50.970:FF:000005">
    <property type="entry name" value="1-deoxy-D-xylulose-5-phosphate synthase"/>
    <property type="match status" value="1"/>
</dbReference>
<dbReference type="Gene3D" id="3.40.50.920">
    <property type="match status" value="1"/>
</dbReference>
<dbReference type="Gene3D" id="3.40.50.970">
    <property type="match status" value="2"/>
</dbReference>
<dbReference type="HAMAP" id="MF_00315">
    <property type="entry name" value="DXP_synth"/>
    <property type="match status" value="1"/>
</dbReference>
<dbReference type="InterPro" id="IPR005477">
    <property type="entry name" value="Dxylulose-5-P_synthase"/>
</dbReference>
<dbReference type="InterPro" id="IPR029061">
    <property type="entry name" value="THDP-binding"/>
</dbReference>
<dbReference type="InterPro" id="IPR009014">
    <property type="entry name" value="Transketo_C/PFOR_II"/>
</dbReference>
<dbReference type="InterPro" id="IPR005475">
    <property type="entry name" value="Transketolase-like_Pyr-bd"/>
</dbReference>
<dbReference type="InterPro" id="IPR020826">
    <property type="entry name" value="Transketolase_BS"/>
</dbReference>
<dbReference type="InterPro" id="IPR033248">
    <property type="entry name" value="Transketolase_C"/>
</dbReference>
<dbReference type="InterPro" id="IPR049557">
    <property type="entry name" value="Transketolase_CS"/>
</dbReference>
<dbReference type="NCBIfam" id="TIGR00204">
    <property type="entry name" value="dxs"/>
    <property type="match status" value="1"/>
</dbReference>
<dbReference type="NCBIfam" id="NF003933">
    <property type="entry name" value="PRK05444.2-2"/>
    <property type="match status" value="1"/>
</dbReference>
<dbReference type="PANTHER" id="PTHR43322">
    <property type="entry name" value="1-D-DEOXYXYLULOSE 5-PHOSPHATE SYNTHASE-RELATED"/>
    <property type="match status" value="1"/>
</dbReference>
<dbReference type="PANTHER" id="PTHR43322:SF5">
    <property type="entry name" value="1-DEOXY-D-XYLULOSE-5-PHOSPHATE SYNTHASE, CHLOROPLASTIC"/>
    <property type="match status" value="1"/>
</dbReference>
<dbReference type="Pfam" id="PF13292">
    <property type="entry name" value="DXP_synthase_N"/>
    <property type="match status" value="1"/>
</dbReference>
<dbReference type="Pfam" id="PF02779">
    <property type="entry name" value="Transket_pyr"/>
    <property type="match status" value="1"/>
</dbReference>
<dbReference type="Pfam" id="PF02780">
    <property type="entry name" value="Transketolase_C"/>
    <property type="match status" value="1"/>
</dbReference>
<dbReference type="SMART" id="SM00861">
    <property type="entry name" value="Transket_pyr"/>
    <property type="match status" value="1"/>
</dbReference>
<dbReference type="SUPFAM" id="SSF52518">
    <property type="entry name" value="Thiamin diphosphate-binding fold (THDP-binding)"/>
    <property type="match status" value="2"/>
</dbReference>
<dbReference type="SUPFAM" id="SSF52922">
    <property type="entry name" value="TK C-terminal domain-like"/>
    <property type="match status" value="1"/>
</dbReference>
<dbReference type="PROSITE" id="PS00801">
    <property type="entry name" value="TRANSKETOLASE_1"/>
    <property type="match status" value="1"/>
</dbReference>
<dbReference type="PROSITE" id="PS00802">
    <property type="entry name" value="TRANSKETOLASE_2"/>
    <property type="match status" value="1"/>
</dbReference>
<sequence length="636" mass="69098">MNLSDITHPNQLHGLSNRQLEDIARQIREKHLQTIAASGGHLGPGLGVVELTIALYQTLDLDRDKVIWDVGHQAYPHKMLTGRYHRFHTLRQKDGIAGYLKRCESNFDHFGAGHASTSISAGLGMALARDAKGEDYKVVSIIGDGALTGGMALEAINHAGHLPHTNLMVVLNDNEMSISPNVGAISRYLNKVRLSDPVQFLSDNLEEQFKHLPFFGESLTPEMERVKEGMKRLAMPKVGAVIEELGFKYFGPIDGHNLEELISTFKQAHKAGGPVFVHVATVKGKGYELAEKDQVGYHAQSPFNLATGKAIPSNKPKPPSYSKVFAHTLTTLAQNDPKIIGITAAMATGTGLDKLHAKLPKQYIDVGIAEQHAVTLSAGLACEGMRPVVAIYSTFLQRAYDQVLHDVCIQNLPVFFCLDRAGIVGADGPTHQGLYDIAYLRCIPNLTIMAPKDEAELQRMVVTGINHTDGPIAMRYPRGSGVGVPLMEEGWEPVSIGKGEILRNGDDVLLVGYGTMVHQSLQVAEILKEHGIEATVVNARFVKPLDTELIVPLAQRIGKVVTLEEGCLMGGFGSAVAEALLDHDVVVPIKRFGVPDKLVDHAKPDESKADLGLTSPQIAEEIRQLFFNTPQPSAVS</sequence>
<feature type="chain" id="PRO_1000115735" description="1-deoxy-D-xylulose-5-phosphate synthase">
    <location>
        <begin position="1"/>
        <end position="636"/>
    </location>
</feature>
<feature type="binding site" evidence="1">
    <location>
        <position position="72"/>
    </location>
    <ligand>
        <name>thiamine diphosphate</name>
        <dbReference type="ChEBI" id="CHEBI:58937"/>
    </ligand>
</feature>
<feature type="binding site" evidence="1">
    <location>
        <begin position="113"/>
        <end position="115"/>
    </location>
    <ligand>
        <name>thiamine diphosphate</name>
        <dbReference type="ChEBI" id="CHEBI:58937"/>
    </ligand>
</feature>
<feature type="binding site" evidence="1">
    <location>
        <position position="144"/>
    </location>
    <ligand>
        <name>Mg(2+)</name>
        <dbReference type="ChEBI" id="CHEBI:18420"/>
    </ligand>
</feature>
<feature type="binding site" evidence="1">
    <location>
        <begin position="145"/>
        <end position="146"/>
    </location>
    <ligand>
        <name>thiamine diphosphate</name>
        <dbReference type="ChEBI" id="CHEBI:58937"/>
    </ligand>
</feature>
<feature type="binding site" evidence="1">
    <location>
        <position position="174"/>
    </location>
    <ligand>
        <name>Mg(2+)</name>
        <dbReference type="ChEBI" id="CHEBI:18420"/>
    </ligand>
</feature>
<feature type="binding site" evidence="1">
    <location>
        <position position="174"/>
    </location>
    <ligand>
        <name>thiamine diphosphate</name>
        <dbReference type="ChEBI" id="CHEBI:58937"/>
    </ligand>
</feature>
<feature type="binding site" evidence="1">
    <location>
        <position position="287"/>
    </location>
    <ligand>
        <name>thiamine diphosphate</name>
        <dbReference type="ChEBI" id="CHEBI:58937"/>
    </ligand>
</feature>
<feature type="binding site" evidence="1">
    <location>
        <position position="370"/>
    </location>
    <ligand>
        <name>thiamine diphosphate</name>
        <dbReference type="ChEBI" id="CHEBI:58937"/>
    </ligand>
</feature>
<reference key="1">
    <citation type="journal article" date="2008" name="Proc. Natl. Acad. Sci. U.S.A.">
        <title>The genome of Cyanothece 51142, a unicellular diazotrophic cyanobacterium important in the marine nitrogen cycle.</title>
        <authorList>
            <person name="Welsh E.A."/>
            <person name="Liberton M."/>
            <person name="Stoeckel J."/>
            <person name="Loh T."/>
            <person name="Elvitigala T."/>
            <person name="Wang C."/>
            <person name="Wollam A."/>
            <person name="Fulton R.S."/>
            <person name="Clifton S.W."/>
            <person name="Jacobs J.M."/>
            <person name="Aurora R."/>
            <person name="Ghosh B.K."/>
            <person name="Sherman L.A."/>
            <person name="Smith R.D."/>
            <person name="Wilson R.K."/>
            <person name="Pakrasi H.B."/>
        </authorList>
    </citation>
    <scope>NUCLEOTIDE SEQUENCE [LARGE SCALE GENOMIC DNA]</scope>
    <source>
        <strain>ATCC 51142 / BH68</strain>
    </source>
</reference>
<name>DXS_CROS5</name>
<protein>
    <recommendedName>
        <fullName evidence="1">1-deoxy-D-xylulose-5-phosphate synthase</fullName>
        <ecNumber evidence="1">2.2.1.7</ecNumber>
    </recommendedName>
    <alternativeName>
        <fullName evidence="1">1-deoxyxylulose-5-phosphate synthase</fullName>
        <shortName evidence="1">DXP synthase</shortName>
        <shortName evidence="1">DXPS</shortName>
    </alternativeName>
</protein>
<gene>
    <name evidence="1" type="primary">dxs</name>
    <name type="ordered locus">cce_1401</name>
</gene>